<comment type="function">
    <text evidence="1">Functions in the biosynthesis of branched-chain amino acids. Catalyzes the dehydration of (2R,3R)-2,3-dihydroxy-3-methylpentanoate (2,3-dihydroxy-3-methylvalerate) into 2-oxo-3-methylpentanoate (2-oxo-3-methylvalerate) and of (2R)-2,3-dihydroxy-3-methylbutanoate (2,3-dihydroxyisovalerate) into 2-oxo-3-methylbutanoate (2-oxoisovalerate), the penultimate precursor to L-isoleucine and L-valine, respectively.</text>
</comment>
<comment type="catalytic activity">
    <reaction evidence="1">
        <text>(2R)-2,3-dihydroxy-3-methylbutanoate = 3-methyl-2-oxobutanoate + H2O</text>
        <dbReference type="Rhea" id="RHEA:24809"/>
        <dbReference type="ChEBI" id="CHEBI:11851"/>
        <dbReference type="ChEBI" id="CHEBI:15377"/>
        <dbReference type="ChEBI" id="CHEBI:49072"/>
        <dbReference type="EC" id="4.2.1.9"/>
    </reaction>
    <physiologicalReaction direction="left-to-right" evidence="1">
        <dbReference type="Rhea" id="RHEA:24810"/>
    </physiologicalReaction>
</comment>
<comment type="catalytic activity">
    <reaction evidence="1">
        <text>(2R,3R)-2,3-dihydroxy-3-methylpentanoate = (S)-3-methyl-2-oxopentanoate + H2O</text>
        <dbReference type="Rhea" id="RHEA:27694"/>
        <dbReference type="ChEBI" id="CHEBI:15377"/>
        <dbReference type="ChEBI" id="CHEBI:35146"/>
        <dbReference type="ChEBI" id="CHEBI:49258"/>
        <dbReference type="EC" id="4.2.1.9"/>
    </reaction>
    <physiologicalReaction direction="left-to-right" evidence="1">
        <dbReference type="Rhea" id="RHEA:27695"/>
    </physiologicalReaction>
</comment>
<comment type="cofactor">
    <cofactor evidence="1">
        <name>[2Fe-2S] cluster</name>
        <dbReference type="ChEBI" id="CHEBI:190135"/>
    </cofactor>
    <text evidence="1">Binds 1 [2Fe-2S] cluster per subunit. This cluster acts as a Lewis acid cofactor.</text>
</comment>
<comment type="cofactor">
    <cofactor evidence="1">
        <name>Mg(2+)</name>
        <dbReference type="ChEBI" id="CHEBI:18420"/>
    </cofactor>
</comment>
<comment type="pathway">
    <text evidence="1">Amino-acid biosynthesis; L-isoleucine biosynthesis; L-isoleucine from 2-oxobutanoate: step 3/4.</text>
</comment>
<comment type="pathway">
    <text evidence="1">Amino-acid biosynthesis; L-valine biosynthesis; L-valine from pyruvate: step 3/4.</text>
</comment>
<comment type="subunit">
    <text evidence="1">Homodimer.</text>
</comment>
<comment type="similarity">
    <text evidence="1">Belongs to the IlvD/Edd family.</text>
</comment>
<comment type="sequence caution" evidence="2">
    <conflict type="erroneous initiation">
        <sequence resource="EMBL-CDS" id="ABD39915"/>
    </conflict>
</comment>
<accession>Q2FMZ1</accession>
<name>ILVD_METHJ</name>
<dbReference type="EC" id="4.2.1.9" evidence="1"/>
<dbReference type="EMBL" id="CP000254">
    <property type="protein sequence ID" value="ABD39915.1"/>
    <property type="status" value="ALT_INIT"/>
    <property type="molecule type" value="Genomic_DNA"/>
</dbReference>
<dbReference type="RefSeq" id="WP_048067168.1">
    <property type="nucleotide sequence ID" value="NC_007796.1"/>
</dbReference>
<dbReference type="SMR" id="Q2FMZ1"/>
<dbReference type="FunCoup" id="Q2FMZ1">
    <property type="interactions" value="169"/>
</dbReference>
<dbReference type="STRING" id="323259.Mhun_0139"/>
<dbReference type="EnsemblBacteria" id="ABD39915">
    <property type="protein sequence ID" value="ABD39915"/>
    <property type="gene ID" value="Mhun_0139"/>
</dbReference>
<dbReference type="GeneID" id="3924569"/>
<dbReference type="KEGG" id="mhu:Mhun_0139"/>
<dbReference type="eggNOG" id="arCOG04045">
    <property type="taxonomic scope" value="Archaea"/>
</dbReference>
<dbReference type="HOGENOM" id="CLU_014271_4_2_2"/>
<dbReference type="InParanoid" id="Q2FMZ1"/>
<dbReference type="OrthoDB" id="8674at2157"/>
<dbReference type="UniPathway" id="UPA00047">
    <property type="reaction ID" value="UER00057"/>
</dbReference>
<dbReference type="UniPathway" id="UPA00049">
    <property type="reaction ID" value="UER00061"/>
</dbReference>
<dbReference type="Proteomes" id="UP000001941">
    <property type="component" value="Chromosome"/>
</dbReference>
<dbReference type="GO" id="GO:0005829">
    <property type="term" value="C:cytosol"/>
    <property type="evidence" value="ECO:0007669"/>
    <property type="project" value="TreeGrafter"/>
</dbReference>
<dbReference type="GO" id="GO:0051537">
    <property type="term" value="F:2 iron, 2 sulfur cluster binding"/>
    <property type="evidence" value="ECO:0007669"/>
    <property type="project" value="UniProtKB-UniRule"/>
</dbReference>
<dbReference type="GO" id="GO:0004160">
    <property type="term" value="F:dihydroxy-acid dehydratase activity"/>
    <property type="evidence" value="ECO:0007669"/>
    <property type="project" value="UniProtKB-UniRule"/>
</dbReference>
<dbReference type="GO" id="GO:0000287">
    <property type="term" value="F:magnesium ion binding"/>
    <property type="evidence" value="ECO:0007669"/>
    <property type="project" value="UniProtKB-UniRule"/>
</dbReference>
<dbReference type="GO" id="GO:0009097">
    <property type="term" value="P:isoleucine biosynthetic process"/>
    <property type="evidence" value="ECO:0007669"/>
    <property type="project" value="UniProtKB-UniRule"/>
</dbReference>
<dbReference type="GO" id="GO:0009099">
    <property type="term" value="P:L-valine biosynthetic process"/>
    <property type="evidence" value="ECO:0007669"/>
    <property type="project" value="UniProtKB-UniRule"/>
</dbReference>
<dbReference type="FunFam" id="3.50.30.80:FF:000001">
    <property type="entry name" value="Dihydroxy-acid dehydratase"/>
    <property type="match status" value="1"/>
</dbReference>
<dbReference type="Gene3D" id="3.50.30.80">
    <property type="entry name" value="IlvD/EDD C-terminal domain-like"/>
    <property type="match status" value="1"/>
</dbReference>
<dbReference type="HAMAP" id="MF_00012">
    <property type="entry name" value="IlvD"/>
    <property type="match status" value="1"/>
</dbReference>
<dbReference type="InterPro" id="IPR042096">
    <property type="entry name" value="Dihydro-acid_dehy_C"/>
</dbReference>
<dbReference type="InterPro" id="IPR004404">
    <property type="entry name" value="DihydroxyA_deHydtase"/>
</dbReference>
<dbReference type="InterPro" id="IPR020558">
    <property type="entry name" value="DiOHA_6PGluconate_deHydtase_CS"/>
</dbReference>
<dbReference type="InterPro" id="IPR056740">
    <property type="entry name" value="ILV_EDD_C"/>
</dbReference>
<dbReference type="InterPro" id="IPR000581">
    <property type="entry name" value="ILV_EDD_N"/>
</dbReference>
<dbReference type="InterPro" id="IPR037237">
    <property type="entry name" value="IlvD/EDD_N"/>
</dbReference>
<dbReference type="NCBIfam" id="TIGR00110">
    <property type="entry name" value="ilvD"/>
    <property type="match status" value="1"/>
</dbReference>
<dbReference type="NCBIfam" id="NF002068">
    <property type="entry name" value="PRK00911.1"/>
    <property type="match status" value="1"/>
</dbReference>
<dbReference type="PANTHER" id="PTHR43661">
    <property type="entry name" value="D-XYLONATE DEHYDRATASE"/>
    <property type="match status" value="1"/>
</dbReference>
<dbReference type="PANTHER" id="PTHR43661:SF3">
    <property type="entry name" value="D-XYLONATE DEHYDRATASE YAGF-RELATED"/>
    <property type="match status" value="1"/>
</dbReference>
<dbReference type="Pfam" id="PF24877">
    <property type="entry name" value="ILV_EDD_C"/>
    <property type="match status" value="1"/>
</dbReference>
<dbReference type="Pfam" id="PF00920">
    <property type="entry name" value="ILVD_EDD_N"/>
    <property type="match status" value="1"/>
</dbReference>
<dbReference type="SUPFAM" id="SSF143975">
    <property type="entry name" value="IlvD/EDD N-terminal domain-like"/>
    <property type="match status" value="1"/>
</dbReference>
<dbReference type="SUPFAM" id="SSF52016">
    <property type="entry name" value="LeuD/IlvD-like"/>
    <property type="match status" value="1"/>
</dbReference>
<dbReference type="PROSITE" id="PS00886">
    <property type="entry name" value="ILVD_EDD_1"/>
    <property type="match status" value="1"/>
</dbReference>
<dbReference type="PROSITE" id="PS00887">
    <property type="entry name" value="ILVD_EDD_2"/>
    <property type="match status" value="1"/>
</dbReference>
<feature type="chain" id="PRO_0000321614" description="Dihydroxy-acid dehydratase">
    <location>
        <begin position="1"/>
        <end position="547"/>
    </location>
</feature>
<feature type="active site" description="Proton acceptor" evidence="1">
    <location>
        <position position="464"/>
    </location>
</feature>
<feature type="binding site" evidence="1">
    <location>
        <position position="78"/>
    </location>
    <ligand>
        <name>Mg(2+)</name>
        <dbReference type="ChEBI" id="CHEBI:18420"/>
    </ligand>
</feature>
<feature type="binding site" evidence="1">
    <location>
        <position position="119"/>
    </location>
    <ligand>
        <name>[2Fe-2S] cluster</name>
        <dbReference type="ChEBI" id="CHEBI:190135"/>
    </ligand>
</feature>
<feature type="binding site" evidence="1">
    <location>
        <position position="120"/>
    </location>
    <ligand>
        <name>Mg(2+)</name>
        <dbReference type="ChEBI" id="CHEBI:18420"/>
    </ligand>
</feature>
<feature type="binding site" description="via carbamate group" evidence="1">
    <location>
        <position position="121"/>
    </location>
    <ligand>
        <name>Mg(2+)</name>
        <dbReference type="ChEBI" id="CHEBI:18420"/>
    </ligand>
</feature>
<feature type="binding site" evidence="1">
    <location>
        <position position="191"/>
    </location>
    <ligand>
        <name>[2Fe-2S] cluster</name>
        <dbReference type="ChEBI" id="CHEBI:190135"/>
    </ligand>
</feature>
<feature type="binding site" evidence="1">
    <location>
        <position position="439"/>
    </location>
    <ligand>
        <name>Mg(2+)</name>
        <dbReference type="ChEBI" id="CHEBI:18420"/>
    </ligand>
</feature>
<feature type="modified residue" description="N6-carboxylysine" evidence="1">
    <location>
        <position position="121"/>
    </location>
</feature>
<reference key="1">
    <citation type="journal article" date="2016" name="Stand. Genomic Sci.">
        <title>Complete genome sequence of Methanospirillum hungatei type strain JF1.</title>
        <authorList>
            <person name="Gunsalus R.P."/>
            <person name="Cook L.E."/>
            <person name="Crable B."/>
            <person name="Rohlin L."/>
            <person name="McDonald E."/>
            <person name="Mouttaki H."/>
            <person name="Sieber J.R."/>
            <person name="Poweleit N."/>
            <person name="Zhou H."/>
            <person name="Lapidus A.L."/>
            <person name="Daligault H.E."/>
            <person name="Land M."/>
            <person name="Gilna P."/>
            <person name="Ivanova N."/>
            <person name="Kyrpides N."/>
            <person name="Culley D.E."/>
            <person name="McInerney M.J."/>
        </authorList>
    </citation>
    <scope>NUCLEOTIDE SEQUENCE [LARGE SCALE GENOMIC DNA]</scope>
    <source>
        <strain>ATCC 27890 / DSM 864 / NBRC 100397 / JF-1</strain>
    </source>
</reference>
<keyword id="KW-0001">2Fe-2S</keyword>
<keyword id="KW-0028">Amino-acid biosynthesis</keyword>
<keyword id="KW-0100">Branched-chain amino acid biosynthesis</keyword>
<keyword id="KW-0408">Iron</keyword>
<keyword id="KW-0411">Iron-sulfur</keyword>
<keyword id="KW-0456">Lyase</keyword>
<keyword id="KW-0460">Magnesium</keyword>
<keyword id="KW-0479">Metal-binding</keyword>
<keyword id="KW-1185">Reference proteome</keyword>
<proteinExistence type="inferred from homology"/>
<evidence type="ECO:0000255" key="1">
    <source>
        <dbReference type="HAMAP-Rule" id="MF_00012"/>
    </source>
</evidence>
<evidence type="ECO:0000305" key="2"/>
<organism>
    <name type="scientific">Methanospirillum hungatei JF-1 (strain ATCC 27890 / DSM 864 / NBRC 100397 / JF-1)</name>
    <dbReference type="NCBI Taxonomy" id="323259"/>
    <lineage>
        <taxon>Archaea</taxon>
        <taxon>Methanobacteriati</taxon>
        <taxon>Methanobacteriota</taxon>
        <taxon>Stenosarchaea group</taxon>
        <taxon>Methanomicrobia</taxon>
        <taxon>Methanomicrobiales</taxon>
        <taxon>Methanospirillaceae</taxon>
        <taxon>Methanospirillum</taxon>
    </lineage>
</organism>
<protein>
    <recommendedName>
        <fullName evidence="1">Dihydroxy-acid dehydratase</fullName>
        <shortName evidence="1">DAD</shortName>
        <ecNumber evidence="1">4.2.1.9</ecNumber>
    </recommendedName>
</protein>
<sequence>MRSDDVKAGYARAPNRSLIRSLGIDESEMHQPFIGIANSWNTIVPGHTHLRVLGERVREGITAGGGTPFEFNTIGICDGIAMGHEGMRYSLPSRENIADSVELMIQAHKFDGIVCICTCDKIVPGMLMAAGRCNIPAIVLTGGNMLPGNLHGCELSLTDVFEGVGKVAGGTMTEEELTELETAAMPGCGSCQGLYTANTMACMTEALGMSLPGCAATPAVYADKIRLAYRTGKRIVDLVRKQILPRDIITPASLRNAIRVDMALGGSTNTVLHLMAIATEAGVPFDLQEFNRLSEQIPHIASMMPAGPHSMQALHHAGGIPAVFRQIRSHLENCQTVSGMDIYTIADSVKYVDESVIRPEQSPVHQSGGLMILTGSLAPDGAVIKSGAVQDEMWKHTGPARVFDGEELAMKAILAREIKEGDIIVIRYEGPKGGPGMPEMLSPTSALVGLGYSRVALITDGRFSGGTRGPCIGHVAPEAAAGGPIAFVKDGDQISIDLFTKTVNLNISADEIENRKKGWKPLKRPLTGVLARYAAAVGPADLGAVLQ</sequence>
<gene>
    <name evidence="1" type="primary">ilvD</name>
    <name type="ordered locus">Mhun_0139</name>
</gene>